<proteinExistence type="inferred from homology"/>
<sequence length="360" mass="40564">MKSSIVAKLEALQERHEEVLAYLGDASVIADQDRFRALSREYAQLTDVTRCFKEWRSAQDDIEAAEMMLDDLEMREMAQEELKIAKARSEELEQQLQVLLLPKDPDDERDCFLEIRAGTGGDEAAIFAGDMFRMYSRYAETRRWKVEIMSASEGEHGGYKEIIAKISGDGVFGQLKFESGGHRVQRVPETESQGRIHTSACTVAVMPAIPEAELPEINAGDLRIDTFRSSGAGGQHVNTTDSAIRITHIPTGIVVECQDERSQHKNKAKAMSVLGARIRAAEMQKRQLAEASERRNLLGTGDRSDRNRTYNFPQGRVTDHRINLTLYRLDEVMEGKLDMLIQPIVQEYQADQLSALSEQD</sequence>
<name>RF1_YERPY</name>
<gene>
    <name evidence="1" type="primary">prfA</name>
    <name type="ordered locus">YPK_2179</name>
</gene>
<evidence type="ECO:0000255" key="1">
    <source>
        <dbReference type="HAMAP-Rule" id="MF_00093"/>
    </source>
</evidence>
<evidence type="ECO:0000256" key="2">
    <source>
        <dbReference type="SAM" id="MobiDB-lite"/>
    </source>
</evidence>
<dbReference type="EMBL" id="CP000950">
    <property type="protein sequence ID" value="ACA68462.1"/>
    <property type="molecule type" value="Genomic_DNA"/>
</dbReference>
<dbReference type="RefSeq" id="WP_002211236.1">
    <property type="nucleotide sequence ID" value="NZ_CP009792.1"/>
</dbReference>
<dbReference type="SMR" id="B1JM85"/>
<dbReference type="GeneID" id="57976644"/>
<dbReference type="KEGG" id="ypy:YPK_2179"/>
<dbReference type="PATRIC" id="fig|502800.11.peg.2852"/>
<dbReference type="GO" id="GO:0005737">
    <property type="term" value="C:cytoplasm"/>
    <property type="evidence" value="ECO:0007669"/>
    <property type="project" value="UniProtKB-SubCell"/>
</dbReference>
<dbReference type="GO" id="GO:0016149">
    <property type="term" value="F:translation release factor activity, codon specific"/>
    <property type="evidence" value="ECO:0007669"/>
    <property type="project" value="UniProtKB-UniRule"/>
</dbReference>
<dbReference type="FunFam" id="3.30.160.20:FF:000004">
    <property type="entry name" value="Peptide chain release factor 1"/>
    <property type="match status" value="1"/>
</dbReference>
<dbReference type="FunFam" id="3.30.70.1660:FF:000002">
    <property type="entry name" value="Peptide chain release factor 1"/>
    <property type="match status" value="1"/>
</dbReference>
<dbReference type="FunFam" id="3.30.70.1660:FF:000004">
    <property type="entry name" value="Peptide chain release factor 1"/>
    <property type="match status" value="1"/>
</dbReference>
<dbReference type="Gene3D" id="3.30.160.20">
    <property type="match status" value="1"/>
</dbReference>
<dbReference type="Gene3D" id="3.30.70.1660">
    <property type="match status" value="1"/>
</dbReference>
<dbReference type="Gene3D" id="6.10.140.1950">
    <property type="match status" value="1"/>
</dbReference>
<dbReference type="HAMAP" id="MF_00093">
    <property type="entry name" value="Rel_fac_1"/>
    <property type="match status" value="1"/>
</dbReference>
<dbReference type="InterPro" id="IPR005139">
    <property type="entry name" value="PCRF"/>
</dbReference>
<dbReference type="InterPro" id="IPR000352">
    <property type="entry name" value="Pep_chain_release_fac_I"/>
</dbReference>
<dbReference type="InterPro" id="IPR045853">
    <property type="entry name" value="Pep_chain_release_fac_I_sf"/>
</dbReference>
<dbReference type="InterPro" id="IPR050057">
    <property type="entry name" value="Prokaryotic/Mito_RF"/>
</dbReference>
<dbReference type="InterPro" id="IPR004373">
    <property type="entry name" value="RF-1"/>
</dbReference>
<dbReference type="NCBIfam" id="TIGR00019">
    <property type="entry name" value="prfA"/>
    <property type="match status" value="1"/>
</dbReference>
<dbReference type="NCBIfam" id="NF001859">
    <property type="entry name" value="PRK00591.1"/>
    <property type="match status" value="1"/>
</dbReference>
<dbReference type="PANTHER" id="PTHR43804">
    <property type="entry name" value="LD18447P"/>
    <property type="match status" value="1"/>
</dbReference>
<dbReference type="PANTHER" id="PTHR43804:SF7">
    <property type="entry name" value="LD18447P"/>
    <property type="match status" value="1"/>
</dbReference>
<dbReference type="Pfam" id="PF03462">
    <property type="entry name" value="PCRF"/>
    <property type="match status" value="1"/>
</dbReference>
<dbReference type="Pfam" id="PF00472">
    <property type="entry name" value="RF-1"/>
    <property type="match status" value="1"/>
</dbReference>
<dbReference type="SMART" id="SM00937">
    <property type="entry name" value="PCRF"/>
    <property type="match status" value="1"/>
</dbReference>
<dbReference type="SUPFAM" id="SSF75620">
    <property type="entry name" value="Release factor"/>
    <property type="match status" value="1"/>
</dbReference>
<dbReference type="PROSITE" id="PS00745">
    <property type="entry name" value="RF_PROK_I"/>
    <property type="match status" value="1"/>
</dbReference>
<reference key="1">
    <citation type="submission" date="2008-02" db="EMBL/GenBank/DDBJ databases">
        <title>Complete sequence of Yersinia pseudotuberculosis YPIII.</title>
        <authorList>
            <consortium name="US DOE Joint Genome Institute"/>
            <person name="Copeland A."/>
            <person name="Lucas S."/>
            <person name="Lapidus A."/>
            <person name="Glavina del Rio T."/>
            <person name="Dalin E."/>
            <person name="Tice H."/>
            <person name="Bruce D."/>
            <person name="Goodwin L."/>
            <person name="Pitluck S."/>
            <person name="Munk A.C."/>
            <person name="Brettin T."/>
            <person name="Detter J.C."/>
            <person name="Han C."/>
            <person name="Tapia R."/>
            <person name="Schmutz J."/>
            <person name="Larimer F."/>
            <person name="Land M."/>
            <person name="Hauser L."/>
            <person name="Challacombe J.F."/>
            <person name="Green L."/>
            <person name="Lindler L.E."/>
            <person name="Nikolich M.P."/>
            <person name="Richardson P."/>
        </authorList>
    </citation>
    <scope>NUCLEOTIDE SEQUENCE [LARGE SCALE GENOMIC DNA]</scope>
    <source>
        <strain>YPIII</strain>
    </source>
</reference>
<comment type="function">
    <text evidence="1">Peptide chain release factor 1 directs the termination of translation in response to the peptide chain termination codons UAG and UAA.</text>
</comment>
<comment type="subcellular location">
    <subcellularLocation>
        <location evidence="1">Cytoplasm</location>
    </subcellularLocation>
</comment>
<comment type="PTM">
    <text evidence="1">Methylated by PrmC. Methylation increases the termination efficiency of RF1.</text>
</comment>
<comment type="similarity">
    <text evidence="1">Belongs to the prokaryotic/mitochondrial release factor family.</text>
</comment>
<protein>
    <recommendedName>
        <fullName evidence="1">Peptide chain release factor 1</fullName>
        <shortName evidence="1">RF-1</shortName>
    </recommendedName>
</protein>
<keyword id="KW-0963">Cytoplasm</keyword>
<keyword id="KW-0488">Methylation</keyword>
<keyword id="KW-0648">Protein biosynthesis</keyword>
<feature type="chain" id="PRO_1000093530" description="Peptide chain release factor 1">
    <location>
        <begin position="1"/>
        <end position="360"/>
    </location>
</feature>
<feature type="region of interest" description="Disordered" evidence="2">
    <location>
        <begin position="291"/>
        <end position="312"/>
    </location>
</feature>
<feature type="compositionally biased region" description="Basic and acidic residues" evidence="2">
    <location>
        <begin position="291"/>
        <end position="308"/>
    </location>
</feature>
<feature type="modified residue" description="N5-methylglutamine" evidence="1">
    <location>
        <position position="235"/>
    </location>
</feature>
<organism>
    <name type="scientific">Yersinia pseudotuberculosis serotype O:3 (strain YPIII)</name>
    <dbReference type="NCBI Taxonomy" id="502800"/>
    <lineage>
        <taxon>Bacteria</taxon>
        <taxon>Pseudomonadati</taxon>
        <taxon>Pseudomonadota</taxon>
        <taxon>Gammaproteobacteria</taxon>
        <taxon>Enterobacterales</taxon>
        <taxon>Yersiniaceae</taxon>
        <taxon>Yersinia</taxon>
    </lineage>
</organism>
<accession>B1JM85</accession>